<keyword id="KW-0067">ATP-binding</keyword>
<keyword id="KW-1003">Cell membrane</keyword>
<keyword id="KW-0256">Endoplasmic reticulum</keyword>
<keyword id="KW-0445">Lipid transport</keyword>
<keyword id="KW-0460">Magnesium</keyword>
<keyword id="KW-0472">Membrane</keyword>
<keyword id="KW-0479">Metal-binding</keyword>
<keyword id="KW-0547">Nucleotide-binding</keyword>
<keyword id="KW-1185">Reference proteome</keyword>
<keyword id="KW-1278">Translocase</keyword>
<keyword id="KW-0812">Transmembrane</keyword>
<keyword id="KW-1133">Transmembrane helix</keyword>
<keyword id="KW-0813">Transport</keyword>
<protein>
    <recommendedName>
        <fullName>Phospholipid-transporting ATPase VD</fullName>
        <ecNumber evidence="4">7.6.2.1</ecNumber>
    </recommendedName>
    <alternativeName>
        <fullName>ATPase class V type 10D</fullName>
    </alternativeName>
    <alternativeName>
        <fullName>P4-ATPase flippase complex alpha subunit ATP10D</fullName>
    </alternativeName>
</protein>
<accession>Q9GKS6</accession>
<proteinExistence type="evidence at transcript level"/>
<comment type="function">
    <text evidence="4">Catalytic component of a P4-ATPase flippase complex, which catalyzes the hydrolysis of ATP coupled to the transport of glucosylceramide (GlcCer) from the outer to the inner leaflet of the plasma membrane.</text>
</comment>
<comment type="catalytic activity">
    <reaction evidence="4">
        <text>ATP + H2O + phospholipidSide 1 = ADP + phosphate + phospholipidSide 2.</text>
        <dbReference type="EC" id="7.6.2.1"/>
    </reaction>
</comment>
<comment type="catalytic activity">
    <reaction evidence="4">
        <text>a beta-D-glucosyl-(1&lt;-&gt;1')-N-acylsphing-4-enine(out) + ATP + H2O = a beta-D-glucosyl-(1&lt;-&gt;1')-N-acylsphing-4-enine(in) + ADP + phosphate + H(+)</text>
        <dbReference type="Rhea" id="RHEA:66036"/>
        <dbReference type="ChEBI" id="CHEBI:15377"/>
        <dbReference type="ChEBI" id="CHEBI:15378"/>
        <dbReference type="ChEBI" id="CHEBI:22801"/>
        <dbReference type="ChEBI" id="CHEBI:30616"/>
        <dbReference type="ChEBI" id="CHEBI:43474"/>
        <dbReference type="ChEBI" id="CHEBI:456216"/>
    </reaction>
    <physiologicalReaction direction="left-to-right" evidence="4">
        <dbReference type="Rhea" id="RHEA:66037"/>
    </physiologicalReaction>
</comment>
<comment type="cofactor">
    <cofactor evidence="5">
        <name>Mg(2+)</name>
        <dbReference type="ChEBI" id="CHEBI:18420"/>
    </cofactor>
</comment>
<comment type="subunit">
    <text evidence="4">Component of a P4-ATPase flippase complex which consists of a catalytic alpha subunit ATP10A and an accessory beta subunit TMEM30A.</text>
</comment>
<comment type="subcellular location">
    <subcellularLocation>
        <location evidence="4">Cell membrane</location>
        <topology evidence="6">Multi-pass membrane protein</topology>
    </subcellularLocation>
    <subcellularLocation>
        <location evidence="4">Endoplasmic reticulum membrane</location>
        <topology evidence="6">Multi-pass membrane protein</topology>
    </subcellularLocation>
    <text evidence="4">Exit from the endoplasmic reticulum requires the presence of TMEM30A, but not that of TMEM30B.</text>
</comment>
<comment type="PTM">
    <text evidence="1">Autophosphorylated at the conserved aspartate of the P-type ATPase signature sequence.</text>
</comment>
<comment type="similarity">
    <text evidence="7">Belongs to the cation transport ATPase (P-type) (TC 3.A.3) family. Type IV subfamily.</text>
</comment>
<reference key="1">
    <citation type="submission" date="2002-10" db="EMBL/GenBank/DDBJ databases">
        <title>Isolation of full-length cDNA clones from macaque brain cDNA libraries.</title>
        <authorList>
            <person name="Osada N."/>
            <person name="Hida M."/>
            <person name="Kusuda J."/>
            <person name="Tanuma R."/>
            <person name="Iseki K."/>
            <person name="Hirata M."/>
            <person name="Suto Y."/>
            <person name="Hirai M."/>
            <person name="Terao K."/>
            <person name="Suzuki Y."/>
            <person name="Sugano S."/>
            <person name="Hashimoto K."/>
            <person name="Kususda J."/>
        </authorList>
    </citation>
    <scope>NUCLEOTIDE SEQUENCE [LARGE SCALE MRNA]</scope>
    <source>
        <tissue>Parietal cortex</tissue>
    </source>
</reference>
<dbReference type="EC" id="7.6.2.1" evidence="4"/>
<dbReference type="EMBL" id="AB052153">
    <property type="protein sequence ID" value="BAB19008.1"/>
    <property type="molecule type" value="mRNA"/>
</dbReference>
<dbReference type="SMR" id="Q9GKS6"/>
<dbReference type="STRING" id="9541.ENSMFAP00000019518"/>
<dbReference type="eggNOG" id="KOG0206">
    <property type="taxonomic scope" value="Eukaryota"/>
</dbReference>
<dbReference type="Proteomes" id="UP000233100">
    <property type="component" value="Unplaced"/>
</dbReference>
<dbReference type="GO" id="GO:0005789">
    <property type="term" value="C:endoplasmic reticulum membrane"/>
    <property type="evidence" value="ECO:0007669"/>
    <property type="project" value="UniProtKB-SubCell"/>
</dbReference>
<dbReference type="GO" id="GO:0005886">
    <property type="term" value="C:plasma membrane"/>
    <property type="evidence" value="ECO:0007669"/>
    <property type="project" value="UniProtKB-SubCell"/>
</dbReference>
<dbReference type="GO" id="GO:0005524">
    <property type="term" value="F:ATP binding"/>
    <property type="evidence" value="ECO:0007669"/>
    <property type="project" value="UniProtKB-KW"/>
</dbReference>
<dbReference type="GO" id="GO:0016887">
    <property type="term" value="F:ATP hydrolysis activity"/>
    <property type="evidence" value="ECO:0007669"/>
    <property type="project" value="InterPro"/>
</dbReference>
<dbReference type="GO" id="GO:0140326">
    <property type="term" value="F:ATPase-coupled intramembrane lipid transporter activity"/>
    <property type="evidence" value="ECO:0007669"/>
    <property type="project" value="UniProtKB-EC"/>
</dbReference>
<dbReference type="GO" id="GO:0000287">
    <property type="term" value="F:magnesium ion binding"/>
    <property type="evidence" value="ECO:0007669"/>
    <property type="project" value="InterPro"/>
</dbReference>
<dbReference type="GO" id="GO:0045332">
    <property type="term" value="P:phospholipid translocation"/>
    <property type="evidence" value="ECO:0007669"/>
    <property type="project" value="TreeGrafter"/>
</dbReference>
<dbReference type="FunFam" id="3.40.1110.10:FF:000009">
    <property type="entry name" value="Phospholipid-transporting ATPase"/>
    <property type="match status" value="1"/>
</dbReference>
<dbReference type="FunFam" id="3.40.50.1000:FF:000023">
    <property type="entry name" value="Phospholipid-transporting ATPase"/>
    <property type="match status" value="1"/>
</dbReference>
<dbReference type="Gene3D" id="3.40.1110.10">
    <property type="entry name" value="Calcium-transporting ATPase, cytoplasmic domain N"/>
    <property type="match status" value="1"/>
</dbReference>
<dbReference type="Gene3D" id="3.40.50.1000">
    <property type="entry name" value="HAD superfamily/HAD-like"/>
    <property type="match status" value="1"/>
</dbReference>
<dbReference type="InterPro" id="IPR023299">
    <property type="entry name" value="ATPase_P-typ_cyto_dom_N"/>
</dbReference>
<dbReference type="InterPro" id="IPR023298">
    <property type="entry name" value="ATPase_P-typ_TM_dom_sf"/>
</dbReference>
<dbReference type="InterPro" id="IPR036412">
    <property type="entry name" value="HAD-like_sf"/>
</dbReference>
<dbReference type="InterPro" id="IPR023214">
    <property type="entry name" value="HAD_sf"/>
</dbReference>
<dbReference type="InterPro" id="IPR006539">
    <property type="entry name" value="P-type_ATPase_IV"/>
</dbReference>
<dbReference type="InterPro" id="IPR001757">
    <property type="entry name" value="P_typ_ATPase"/>
</dbReference>
<dbReference type="InterPro" id="IPR032630">
    <property type="entry name" value="P_typ_ATPase_c"/>
</dbReference>
<dbReference type="NCBIfam" id="TIGR01652">
    <property type="entry name" value="ATPase-Plipid"/>
    <property type="match status" value="1"/>
</dbReference>
<dbReference type="NCBIfam" id="TIGR01494">
    <property type="entry name" value="ATPase_P-type"/>
    <property type="match status" value="2"/>
</dbReference>
<dbReference type="PANTHER" id="PTHR24092:SF84">
    <property type="entry name" value="PHOSPHOLIPID-TRANSPORTING ATPASE VD"/>
    <property type="match status" value="1"/>
</dbReference>
<dbReference type="PANTHER" id="PTHR24092">
    <property type="entry name" value="PROBABLE PHOSPHOLIPID-TRANSPORTING ATPASE"/>
    <property type="match status" value="1"/>
</dbReference>
<dbReference type="Pfam" id="PF13246">
    <property type="entry name" value="Cation_ATPase"/>
    <property type="match status" value="1"/>
</dbReference>
<dbReference type="Pfam" id="PF08282">
    <property type="entry name" value="Hydrolase_3"/>
    <property type="match status" value="1"/>
</dbReference>
<dbReference type="Pfam" id="PF16212">
    <property type="entry name" value="PhoLip_ATPase_C"/>
    <property type="match status" value="1"/>
</dbReference>
<dbReference type="PRINTS" id="PR00119">
    <property type="entry name" value="CATATPASE"/>
</dbReference>
<dbReference type="SUPFAM" id="SSF81665">
    <property type="entry name" value="Calcium ATPase, transmembrane domain M"/>
    <property type="match status" value="1"/>
</dbReference>
<dbReference type="SUPFAM" id="SSF56784">
    <property type="entry name" value="HAD-like"/>
    <property type="match status" value="1"/>
</dbReference>
<dbReference type="SUPFAM" id="SSF81660">
    <property type="entry name" value="Metal cation-transporting ATPase, ATP-binding domain N"/>
    <property type="match status" value="1"/>
</dbReference>
<feature type="chain" id="PRO_0000046383" description="Phospholipid-transporting ATPase VD">
    <location>
        <begin position="1" status="less than"/>
        <end position="653"/>
    </location>
</feature>
<feature type="topological domain" description="Cytoplasmic" evidence="6">
    <location>
        <begin position="1" status="less than"/>
        <end position="375"/>
    </location>
</feature>
<feature type="transmembrane region" description="Helical" evidence="6">
    <location>
        <begin position="376"/>
        <end position="396"/>
    </location>
</feature>
<feature type="topological domain" description="Exoplasmic loop" evidence="6">
    <location>
        <begin position="397"/>
        <end position="407"/>
    </location>
</feature>
<feature type="transmembrane region" description="Helical" evidence="6">
    <location>
        <begin position="408"/>
        <end position="428"/>
    </location>
</feature>
<feature type="topological domain" description="Cytoplasmic" evidence="6">
    <location>
        <begin position="429"/>
        <end position="458"/>
    </location>
</feature>
<feature type="transmembrane region" description="Helical" evidence="6">
    <location>
        <begin position="459"/>
        <end position="480"/>
    </location>
</feature>
<feature type="topological domain" description="Exoplasmic loop" evidence="6">
    <location>
        <begin position="481"/>
        <end position="487"/>
    </location>
</feature>
<feature type="transmembrane region" description="Helical" evidence="6">
    <location>
        <begin position="488"/>
        <end position="510"/>
    </location>
</feature>
<feature type="topological domain" description="Cytoplasmic" evidence="6">
    <location>
        <begin position="511"/>
        <end position="516"/>
    </location>
</feature>
<feature type="transmembrane region" description="Helical" evidence="6">
    <location>
        <begin position="517"/>
        <end position="537"/>
    </location>
</feature>
<feature type="topological domain" description="Exoplasmic loop" evidence="6">
    <location>
        <begin position="538"/>
        <end position="555"/>
    </location>
</feature>
<feature type="transmembrane region" description="Helical" evidence="6">
    <location>
        <begin position="556"/>
        <end position="580"/>
    </location>
</feature>
<feature type="topological domain" description="Cytoplasmic" evidence="6">
    <location>
        <begin position="581"/>
        <end position="653"/>
    </location>
</feature>
<feature type="binding site" evidence="2">
    <location>
        <position position="14"/>
    </location>
    <ligand>
        <name>ATP</name>
        <dbReference type="ChEBI" id="CHEBI:30616"/>
    </ligand>
</feature>
<feature type="binding site" evidence="5">
    <location>
        <position position="56"/>
    </location>
    <ligand>
        <name>ATP</name>
        <dbReference type="ChEBI" id="CHEBI:30616"/>
    </ligand>
</feature>
<feature type="binding site" evidence="2">
    <location>
        <position position="80"/>
    </location>
    <ligand>
        <name>ATP</name>
        <dbReference type="ChEBI" id="CHEBI:30616"/>
    </ligand>
</feature>
<feature type="binding site" evidence="2">
    <location>
        <position position="124"/>
    </location>
    <ligand>
        <name>ATP</name>
        <dbReference type="ChEBI" id="CHEBI:30616"/>
    </ligand>
</feature>
<feature type="binding site" evidence="2">
    <location>
        <position position="204"/>
    </location>
    <ligand>
        <name>ATP</name>
        <dbReference type="ChEBI" id="CHEBI:30616"/>
    </ligand>
</feature>
<feature type="binding site" evidence="2">
    <location>
        <position position="205"/>
    </location>
    <ligand>
        <name>ATP</name>
        <dbReference type="ChEBI" id="CHEBI:30616"/>
    </ligand>
</feature>
<feature type="binding site" evidence="2">
    <location>
        <position position="206"/>
    </location>
    <ligand>
        <name>ATP</name>
        <dbReference type="ChEBI" id="CHEBI:30616"/>
    </ligand>
</feature>
<feature type="binding site" evidence="6">
    <location>
        <begin position="259"/>
        <end position="266"/>
    </location>
    <ligand>
        <name>ATP</name>
        <dbReference type="ChEBI" id="CHEBI:30616"/>
    </ligand>
</feature>
<feature type="binding site" evidence="2">
    <location>
        <position position="293"/>
    </location>
    <ligand>
        <name>ATP</name>
        <dbReference type="ChEBI" id="CHEBI:30616"/>
    </ligand>
</feature>
<feature type="binding site" evidence="2">
    <location>
        <position position="299"/>
    </location>
    <ligand>
        <name>ATP</name>
        <dbReference type="ChEBI" id="CHEBI:30616"/>
    </ligand>
</feature>
<feature type="binding site" evidence="3">
    <location>
        <position position="319"/>
    </location>
    <ligand>
        <name>Mg(2+)</name>
        <dbReference type="ChEBI" id="CHEBI:18420"/>
    </ligand>
</feature>
<feature type="binding site" evidence="5">
    <location>
        <position position="322"/>
    </location>
    <ligand>
        <name>ATP</name>
        <dbReference type="ChEBI" id="CHEBI:30616"/>
    </ligand>
</feature>
<feature type="binding site" evidence="5">
    <location>
        <position position="323"/>
    </location>
    <ligand>
        <name>ATP</name>
        <dbReference type="ChEBI" id="CHEBI:30616"/>
    </ligand>
</feature>
<feature type="binding site" evidence="3">
    <location>
        <position position="323"/>
    </location>
    <ligand>
        <name>Mg(2+)</name>
        <dbReference type="ChEBI" id="CHEBI:18420"/>
    </ligand>
</feature>
<feature type="non-terminal residue">
    <location>
        <position position="1"/>
    </location>
</feature>
<sequence>MACNLCYEAESPDEAALVYAARAYQCTLQSRTPEQVMVDFAASGPLTFQLLHILPFDSVRKRMSVVVRHPLSNQVVVYTKGADSVIMELLSVASPDGAGPEKQQMIIREKTQRHLDDYAKQGLRTLCIAKKVMSDTEYAEWLRNHFLAETSIDNREELLLESAMRLENKLTLLGATGIEDRLQEGVPESIEALHKAGIKIWMLTGDKQETAVNIAYACMLMSTILKELQKKTQALPEQVSLSVDLHQPPVPQDSGLRAGLIITGKTLEFALQESLQKQFLELTSWCQTVVCCRATPLQKSEVVKLVRSHLQVMTLAIGDGANDVSMIQVADIGIGVSGQEGMQAVMASDFAVSQFKHLSKLLLVHGHWCYTRLSNMILYFFYKNVAYVNLLFWYQFFCGFSGTSMTDYWVLIFFNLLFTSAPPVIYGVLEKDVSAETLMQLPELYKSGQKSEAYLPHTFWITLLDAFYQSLVCFFVPYFTYQGSDIDIFAFGNPLNTAALFIILLHLIIESKSLTWIHMLVITGSILSYFLFAIVFGAMCVTCNPPSNPYWIMQEHVLDPVFYLVCILTTCIALLPRFVYRGAGKMNQVTSNYANQSADKSGRRPKPGPSTVFAMKSATSCAIEQGNLSLCETALDQGYSETKAFEMARPCKD</sequence>
<evidence type="ECO:0000250" key="1">
    <source>
        <dbReference type="UniProtKB" id="O94823"/>
    </source>
</evidence>
<evidence type="ECO:0000250" key="2">
    <source>
        <dbReference type="UniProtKB" id="P04191"/>
    </source>
</evidence>
<evidence type="ECO:0000250" key="3">
    <source>
        <dbReference type="UniProtKB" id="Q8NB49"/>
    </source>
</evidence>
<evidence type="ECO:0000250" key="4">
    <source>
        <dbReference type="UniProtKB" id="Q9P241"/>
    </source>
</evidence>
<evidence type="ECO:0000250" key="5">
    <source>
        <dbReference type="UniProtKB" id="Q9Y2Q0"/>
    </source>
</evidence>
<evidence type="ECO:0000255" key="6"/>
<evidence type="ECO:0000305" key="7"/>
<gene>
    <name type="primary">ATP10D</name>
    <name type="ORF">QnpA-21212</name>
</gene>
<name>AT10D_MACFA</name>
<organism>
    <name type="scientific">Macaca fascicularis</name>
    <name type="common">Crab-eating macaque</name>
    <name type="synonym">Cynomolgus monkey</name>
    <dbReference type="NCBI Taxonomy" id="9541"/>
    <lineage>
        <taxon>Eukaryota</taxon>
        <taxon>Metazoa</taxon>
        <taxon>Chordata</taxon>
        <taxon>Craniata</taxon>
        <taxon>Vertebrata</taxon>
        <taxon>Euteleostomi</taxon>
        <taxon>Mammalia</taxon>
        <taxon>Eutheria</taxon>
        <taxon>Euarchontoglires</taxon>
        <taxon>Primates</taxon>
        <taxon>Haplorrhini</taxon>
        <taxon>Catarrhini</taxon>
        <taxon>Cercopithecidae</taxon>
        <taxon>Cercopithecinae</taxon>
        <taxon>Macaca</taxon>
    </lineage>
</organism>